<name>BIOH_CHRVO</name>
<organism>
    <name type="scientific">Chromobacterium violaceum (strain ATCC 12472 / DSM 30191 / JCM 1249 / CCUG 213 / NBRC 12614 / NCIMB 9131 / NCTC 9757 / MK)</name>
    <dbReference type="NCBI Taxonomy" id="243365"/>
    <lineage>
        <taxon>Bacteria</taxon>
        <taxon>Pseudomonadati</taxon>
        <taxon>Pseudomonadota</taxon>
        <taxon>Betaproteobacteria</taxon>
        <taxon>Neisseriales</taxon>
        <taxon>Chromobacteriaceae</taxon>
        <taxon>Chromobacterium</taxon>
    </lineage>
</organism>
<feature type="chain" id="PRO_0000204472" description="Pimeloyl-[acyl-carrier protein] methyl ester esterase">
    <location>
        <begin position="1"/>
        <end position="254"/>
    </location>
</feature>
<feature type="domain" description="AB hydrolase-1" evidence="1">
    <location>
        <begin position="14"/>
        <end position="238"/>
    </location>
</feature>
<feature type="active site" description="Nucleophile" evidence="2">
    <location>
        <position position="80"/>
    </location>
</feature>
<feature type="active site" evidence="2">
    <location>
        <position position="204"/>
    </location>
</feature>
<feature type="active site" evidence="2">
    <location>
        <position position="232"/>
    </location>
</feature>
<feature type="binding site" evidence="2">
    <location>
        <position position="20"/>
    </location>
    <ligand>
        <name>substrate</name>
    </ligand>
</feature>
<feature type="binding site" evidence="2">
    <location>
        <begin position="80"/>
        <end position="81"/>
    </location>
    <ligand>
        <name>substrate</name>
    </ligand>
</feature>
<feature type="binding site" evidence="2">
    <location>
        <begin position="142"/>
        <end position="146"/>
    </location>
    <ligand>
        <name>substrate</name>
    </ligand>
</feature>
<feature type="binding site" evidence="2">
    <location>
        <position position="232"/>
    </location>
    <ligand>
        <name>substrate</name>
    </ligand>
</feature>
<keyword id="KW-0093">Biotin biosynthesis</keyword>
<keyword id="KW-0963">Cytoplasm</keyword>
<keyword id="KW-0378">Hydrolase</keyword>
<keyword id="KW-1185">Reference proteome</keyword>
<keyword id="KW-0719">Serine esterase</keyword>
<accession>Q7NPW5</accession>
<dbReference type="EC" id="3.1.1.85" evidence="2"/>
<dbReference type="EMBL" id="AE016825">
    <property type="protein sequence ID" value="AAQ62036.1"/>
    <property type="status" value="ALT_INIT"/>
    <property type="molecule type" value="Genomic_DNA"/>
</dbReference>
<dbReference type="RefSeq" id="WP_043596933.1">
    <property type="nucleotide sequence ID" value="NC_005085.1"/>
</dbReference>
<dbReference type="SMR" id="Q7NPW5"/>
<dbReference type="STRING" id="243365.CV_4377"/>
<dbReference type="ESTHER" id="chrvi-BIOH">
    <property type="family name" value="BioH"/>
</dbReference>
<dbReference type="KEGG" id="cvi:CV_4377"/>
<dbReference type="eggNOG" id="COG2267">
    <property type="taxonomic scope" value="Bacteria"/>
</dbReference>
<dbReference type="HOGENOM" id="CLU_020336_12_2_4"/>
<dbReference type="OrthoDB" id="9798888at2"/>
<dbReference type="UniPathway" id="UPA00078"/>
<dbReference type="Proteomes" id="UP000001424">
    <property type="component" value="Chromosome"/>
</dbReference>
<dbReference type="GO" id="GO:0005737">
    <property type="term" value="C:cytoplasm"/>
    <property type="evidence" value="ECO:0007669"/>
    <property type="project" value="UniProtKB-SubCell"/>
</dbReference>
<dbReference type="GO" id="GO:0090499">
    <property type="term" value="F:pimelyl-[acyl-carrier protein] methyl ester esterase activity"/>
    <property type="evidence" value="ECO:0007669"/>
    <property type="project" value="UniProtKB-EC"/>
</dbReference>
<dbReference type="GO" id="GO:0009102">
    <property type="term" value="P:biotin biosynthetic process"/>
    <property type="evidence" value="ECO:0007669"/>
    <property type="project" value="UniProtKB-UniRule"/>
</dbReference>
<dbReference type="Gene3D" id="3.40.50.1820">
    <property type="entry name" value="alpha/beta hydrolase"/>
    <property type="match status" value="1"/>
</dbReference>
<dbReference type="HAMAP" id="MF_01260">
    <property type="entry name" value="Carboxylester"/>
    <property type="match status" value="1"/>
</dbReference>
<dbReference type="InterPro" id="IPR000073">
    <property type="entry name" value="AB_hydrolase_1"/>
</dbReference>
<dbReference type="InterPro" id="IPR029058">
    <property type="entry name" value="AB_hydrolase_fold"/>
</dbReference>
<dbReference type="InterPro" id="IPR010076">
    <property type="entry name" value="BioH"/>
</dbReference>
<dbReference type="InterPro" id="IPR050228">
    <property type="entry name" value="Carboxylesterase_BioH"/>
</dbReference>
<dbReference type="NCBIfam" id="TIGR01738">
    <property type="entry name" value="bioH"/>
    <property type="match status" value="1"/>
</dbReference>
<dbReference type="PANTHER" id="PTHR43194">
    <property type="entry name" value="HYDROLASE ALPHA/BETA FOLD FAMILY"/>
    <property type="match status" value="1"/>
</dbReference>
<dbReference type="PANTHER" id="PTHR43194:SF5">
    <property type="entry name" value="PIMELOYL-[ACYL-CARRIER PROTEIN] METHYL ESTER ESTERASE"/>
    <property type="match status" value="1"/>
</dbReference>
<dbReference type="Pfam" id="PF00561">
    <property type="entry name" value="Abhydrolase_1"/>
    <property type="match status" value="1"/>
</dbReference>
<dbReference type="SUPFAM" id="SSF53474">
    <property type="entry name" value="alpha/beta-Hydrolases"/>
    <property type="match status" value="1"/>
</dbReference>
<gene>
    <name evidence="2" type="primary">bioH</name>
    <name type="ordered locus">CV_4377</name>
</gene>
<reference key="1">
    <citation type="journal article" date="2003" name="Proc. Natl. Acad. Sci. U.S.A.">
        <title>The complete genome sequence of Chromobacterium violaceum reveals remarkable and exploitable bacterial adaptability.</title>
        <authorList>
            <person name="Vasconcelos A.T.R."/>
            <person name="de Almeida D.F."/>
            <person name="Hungria M."/>
            <person name="Guimaraes C.T."/>
            <person name="Antonio R.V."/>
            <person name="Almeida F.C."/>
            <person name="de Almeida L.G.P."/>
            <person name="de Almeida R."/>
            <person name="Alves-Gomes J.A."/>
            <person name="Andrade E.M."/>
            <person name="Araripe J."/>
            <person name="de Araujo M.F.F."/>
            <person name="Astolfi-Filho S."/>
            <person name="Azevedo V."/>
            <person name="Baptista A.J."/>
            <person name="Bataus L.A.M."/>
            <person name="Batista J.S."/>
            <person name="Belo A."/>
            <person name="van den Berg C."/>
            <person name="Bogo M."/>
            <person name="Bonatto S."/>
            <person name="Bordignon J."/>
            <person name="Brigido M.M."/>
            <person name="Brito C.A."/>
            <person name="Brocchi M."/>
            <person name="Burity H.A."/>
            <person name="Camargo A.A."/>
            <person name="Cardoso D.D.P."/>
            <person name="Carneiro N.P."/>
            <person name="Carraro D.M."/>
            <person name="Carvalho C.M.B."/>
            <person name="Cascardo J.C.M."/>
            <person name="Cavada B.S."/>
            <person name="Chueire L.M.O."/>
            <person name="Creczynski-Pasa T.B."/>
            <person name="Cunha-Junior N.C."/>
            <person name="Fagundes N."/>
            <person name="Falcao C.L."/>
            <person name="Fantinatti F."/>
            <person name="Farias I.P."/>
            <person name="Felipe M.S.S."/>
            <person name="Ferrari L.P."/>
            <person name="Ferro J.A."/>
            <person name="Ferro M.I.T."/>
            <person name="Franco G.R."/>
            <person name="Freitas N.S.A."/>
            <person name="Furlan L.R."/>
            <person name="Gazzinelli R.T."/>
            <person name="Gomes E.A."/>
            <person name="Goncalves P.R."/>
            <person name="Grangeiro T.B."/>
            <person name="Grattapaglia D."/>
            <person name="Grisard E.C."/>
            <person name="Hanna E.S."/>
            <person name="Jardim S.N."/>
            <person name="Laurino J."/>
            <person name="Leoi L.C.T."/>
            <person name="Lima L.F.A."/>
            <person name="Loureiro M.F."/>
            <person name="Lyra M.C.C.P."/>
            <person name="Madeira H.M.F."/>
            <person name="Manfio G.P."/>
            <person name="Maranhao A.Q."/>
            <person name="Martins W.S."/>
            <person name="di Mauro S.M.Z."/>
            <person name="de Medeiros S.R.B."/>
            <person name="Meissner R.V."/>
            <person name="Moreira M.A.M."/>
            <person name="Nascimento F.F."/>
            <person name="Nicolas M.F."/>
            <person name="Oliveira J.G."/>
            <person name="Oliveira S.C."/>
            <person name="Paixao R.F.C."/>
            <person name="Parente J.A."/>
            <person name="Pedrosa F.O."/>
            <person name="Pena S.D.J."/>
            <person name="Pereira J.O."/>
            <person name="Pereira M."/>
            <person name="Pinto L.S.R.C."/>
            <person name="Pinto L.S."/>
            <person name="Porto J.I.R."/>
            <person name="Potrich D.P."/>
            <person name="Ramalho-Neto C.E."/>
            <person name="Reis A.M.M."/>
            <person name="Rigo L.U."/>
            <person name="Rondinelli E."/>
            <person name="Santos E.B.P."/>
            <person name="Santos F.R."/>
            <person name="Schneider M.P.C."/>
            <person name="Seuanez H.N."/>
            <person name="Silva A.M.R."/>
            <person name="da Silva A.L.C."/>
            <person name="Silva D.W."/>
            <person name="Silva R."/>
            <person name="Simoes I.C."/>
            <person name="Simon D."/>
            <person name="Soares C.M.A."/>
            <person name="Soares R.B.A."/>
            <person name="Souza E.M."/>
            <person name="Souza K.R.L."/>
            <person name="Souza R.C."/>
            <person name="Steffens M.B.R."/>
            <person name="Steindel M."/>
            <person name="Teixeira S.R."/>
            <person name="Urmenyi T."/>
            <person name="Vettore A."/>
            <person name="Wassem R."/>
            <person name="Zaha A."/>
            <person name="Simpson A.J.G."/>
        </authorList>
    </citation>
    <scope>NUCLEOTIDE SEQUENCE [LARGE SCALE GENOMIC DNA]</scope>
    <source>
        <strain>ATCC 12472 / DSM 30191 / JCM 1249 / CCUG 213 / NBRC 12614 / NCIMB 9131 / NCTC 9757 / MK</strain>
    </source>
</reference>
<protein>
    <recommendedName>
        <fullName evidence="2">Pimeloyl-[acyl-carrier protein] methyl ester esterase</fullName>
        <ecNumber evidence="2">3.1.1.85</ecNumber>
    </recommendedName>
    <alternativeName>
        <fullName evidence="2">Biotin synthesis protein BioH</fullName>
    </alternativeName>
    <alternativeName>
        <fullName evidence="2">Carboxylesterase BioH</fullName>
    </alternativeName>
</protein>
<sequence>MNLFVETLGQGPDVVMLHGWGLHGGVFARVAEQLATRFCVHLVDLPGHGASPALPRFDADAVADLLAAHFPLPAQVVGWSLGGLIAQHWAARHPDKVKSLALVATSPRFVRDETWPHAQARASIEAVAQSLDGAFEQTLERFLALQMMGAPSARDTLKALRGELFSHGRPQGLLPALGLLLEADARALAGRIQCPAALFYGARDAITPIGAGRWLAESLPDAVLYEFPQASHAPFLSHEQDFVRALAEHLETQA</sequence>
<proteinExistence type="inferred from homology"/>
<evidence type="ECO:0000255" key="1"/>
<evidence type="ECO:0000255" key="2">
    <source>
        <dbReference type="HAMAP-Rule" id="MF_01260"/>
    </source>
</evidence>
<evidence type="ECO:0000305" key="3"/>
<comment type="function">
    <text evidence="2">The physiological role of BioH is to remove the methyl group introduced by BioC when the pimeloyl moiety is complete. It allows to synthesize pimeloyl-ACP via the fatty acid synthetic pathway through the hydrolysis of the ester bonds of pimeloyl-ACP esters.</text>
</comment>
<comment type="catalytic activity">
    <reaction evidence="2">
        <text>6-carboxyhexanoyl-[ACP] methyl ester + H2O = 6-carboxyhexanoyl-[ACP] + methanol + H(+)</text>
        <dbReference type="Rhea" id="RHEA:42700"/>
        <dbReference type="Rhea" id="RHEA-COMP:9955"/>
        <dbReference type="Rhea" id="RHEA-COMP:10186"/>
        <dbReference type="ChEBI" id="CHEBI:15377"/>
        <dbReference type="ChEBI" id="CHEBI:15378"/>
        <dbReference type="ChEBI" id="CHEBI:17790"/>
        <dbReference type="ChEBI" id="CHEBI:78846"/>
        <dbReference type="ChEBI" id="CHEBI:82735"/>
        <dbReference type="EC" id="3.1.1.85"/>
    </reaction>
</comment>
<comment type="pathway">
    <text evidence="2">Cofactor biosynthesis; biotin biosynthesis.</text>
</comment>
<comment type="subunit">
    <text evidence="2">Monomer.</text>
</comment>
<comment type="subcellular location">
    <subcellularLocation>
        <location evidence="2">Cytoplasm</location>
    </subcellularLocation>
</comment>
<comment type="similarity">
    <text evidence="2">Belongs to the AB hydrolase superfamily. Carboxylesterase BioH family.</text>
</comment>
<comment type="sequence caution" evidence="3">
    <conflict type="erroneous initiation">
        <sequence resource="EMBL-CDS" id="AAQ62036"/>
    </conflict>
</comment>